<name>ACP_GEODF</name>
<protein>
    <recommendedName>
        <fullName evidence="1">Acyl carrier protein</fullName>
        <shortName evidence="1">ACP</shortName>
    </recommendedName>
</protein>
<evidence type="ECO:0000255" key="1">
    <source>
        <dbReference type="HAMAP-Rule" id="MF_01217"/>
    </source>
</evidence>
<evidence type="ECO:0000255" key="2">
    <source>
        <dbReference type="PROSITE-ProRule" id="PRU00258"/>
    </source>
</evidence>
<proteinExistence type="inferred from homology"/>
<organism>
    <name type="scientific">Geotalea daltonii (strain DSM 22248 / JCM 15807 / FRC-32)</name>
    <name type="common">Geobacter daltonii</name>
    <dbReference type="NCBI Taxonomy" id="316067"/>
    <lineage>
        <taxon>Bacteria</taxon>
        <taxon>Pseudomonadati</taxon>
        <taxon>Thermodesulfobacteriota</taxon>
        <taxon>Desulfuromonadia</taxon>
        <taxon>Geobacterales</taxon>
        <taxon>Geobacteraceae</taxon>
        <taxon>Geotalea</taxon>
    </lineage>
</organism>
<keyword id="KW-0963">Cytoplasm</keyword>
<keyword id="KW-0275">Fatty acid biosynthesis</keyword>
<keyword id="KW-0276">Fatty acid metabolism</keyword>
<keyword id="KW-0444">Lipid biosynthesis</keyword>
<keyword id="KW-0443">Lipid metabolism</keyword>
<keyword id="KW-0596">Phosphopantetheine</keyword>
<keyword id="KW-0597">Phosphoprotein</keyword>
<keyword id="KW-1185">Reference proteome</keyword>
<sequence>MSSIDKRIKEIVAEQLGVDEAQVTNEASFMDDLGADSLDTVELVMALEEEFDIEISDEDAEKIQSVQDAIDYITDHT</sequence>
<gene>
    <name evidence="1" type="primary">acpP</name>
    <name type="ordered locus">Geob_2615</name>
</gene>
<dbReference type="EMBL" id="CP001390">
    <property type="protein sequence ID" value="ACM20965.1"/>
    <property type="molecule type" value="Genomic_DNA"/>
</dbReference>
<dbReference type="RefSeq" id="WP_012647694.1">
    <property type="nucleotide sequence ID" value="NC_011979.1"/>
</dbReference>
<dbReference type="SMR" id="B9M0W2"/>
<dbReference type="STRING" id="316067.Geob_2615"/>
<dbReference type="KEGG" id="geo:Geob_2615"/>
<dbReference type="eggNOG" id="COG0236">
    <property type="taxonomic scope" value="Bacteria"/>
</dbReference>
<dbReference type="HOGENOM" id="CLU_108696_5_1_7"/>
<dbReference type="OrthoDB" id="9804551at2"/>
<dbReference type="UniPathway" id="UPA00094"/>
<dbReference type="Proteomes" id="UP000007721">
    <property type="component" value="Chromosome"/>
</dbReference>
<dbReference type="GO" id="GO:0005829">
    <property type="term" value="C:cytosol"/>
    <property type="evidence" value="ECO:0007669"/>
    <property type="project" value="TreeGrafter"/>
</dbReference>
<dbReference type="GO" id="GO:0016020">
    <property type="term" value="C:membrane"/>
    <property type="evidence" value="ECO:0007669"/>
    <property type="project" value="GOC"/>
</dbReference>
<dbReference type="GO" id="GO:0000035">
    <property type="term" value="F:acyl binding"/>
    <property type="evidence" value="ECO:0007669"/>
    <property type="project" value="TreeGrafter"/>
</dbReference>
<dbReference type="GO" id="GO:0000036">
    <property type="term" value="F:acyl carrier activity"/>
    <property type="evidence" value="ECO:0007669"/>
    <property type="project" value="UniProtKB-UniRule"/>
</dbReference>
<dbReference type="GO" id="GO:0009245">
    <property type="term" value="P:lipid A biosynthetic process"/>
    <property type="evidence" value="ECO:0007669"/>
    <property type="project" value="TreeGrafter"/>
</dbReference>
<dbReference type="FunFam" id="1.10.1200.10:FF:000001">
    <property type="entry name" value="Acyl carrier protein"/>
    <property type="match status" value="1"/>
</dbReference>
<dbReference type="Gene3D" id="1.10.1200.10">
    <property type="entry name" value="ACP-like"/>
    <property type="match status" value="1"/>
</dbReference>
<dbReference type="HAMAP" id="MF_01217">
    <property type="entry name" value="Acyl_carrier"/>
    <property type="match status" value="1"/>
</dbReference>
<dbReference type="InterPro" id="IPR003231">
    <property type="entry name" value="ACP"/>
</dbReference>
<dbReference type="InterPro" id="IPR036736">
    <property type="entry name" value="ACP-like_sf"/>
</dbReference>
<dbReference type="InterPro" id="IPR009081">
    <property type="entry name" value="PP-bd_ACP"/>
</dbReference>
<dbReference type="InterPro" id="IPR006162">
    <property type="entry name" value="Ppantetheine_attach_site"/>
</dbReference>
<dbReference type="NCBIfam" id="TIGR00517">
    <property type="entry name" value="acyl_carrier"/>
    <property type="match status" value="1"/>
</dbReference>
<dbReference type="NCBIfam" id="NF002148">
    <property type="entry name" value="PRK00982.1-2"/>
    <property type="match status" value="1"/>
</dbReference>
<dbReference type="NCBIfam" id="NF002149">
    <property type="entry name" value="PRK00982.1-3"/>
    <property type="match status" value="1"/>
</dbReference>
<dbReference type="NCBIfam" id="NF002150">
    <property type="entry name" value="PRK00982.1-4"/>
    <property type="match status" value="1"/>
</dbReference>
<dbReference type="NCBIfam" id="NF002151">
    <property type="entry name" value="PRK00982.1-5"/>
    <property type="match status" value="1"/>
</dbReference>
<dbReference type="PANTHER" id="PTHR20863">
    <property type="entry name" value="ACYL CARRIER PROTEIN"/>
    <property type="match status" value="1"/>
</dbReference>
<dbReference type="PANTHER" id="PTHR20863:SF76">
    <property type="entry name" value="CARRIER DOMAIN-CONTAINING PROTEIN"/>
    <property type="match status" value="1"/>
</dbReference>
<dbReference type="Pfam" id="PF00550">
    <property type="entry name" value="PP-binding"/>
    <property type="match status" value="1"/>
</dbReference>
<dbReference type="SUPFAM" id="SSF47336">
    <property type="entry name" value="ACP-like"/>
    <property type="match status" value="1"/>
</dbReference>
<dbReference type="PROSITE" id="PS50075">
    <property type="entry name" value="CARRIER"/>
    <property type="match status" value="1"/>
</dbReference>
<dbReference type="PROSITE" id="PS00012">
    <property type="entry name" value="PHOSPHOPANTETHEINE"/>
    <property type="match status" value="1"/>
</dbReference>
<comment type="function">
    <text evidence="1">Carrier of the growing fatty acid chain in fatty acid biosynthesis.</text>
</comment>
<comment type="pathway">
    <text evidence="1">Lipid metabolism; fatty acid biosynthesis.</text>
</comment>
<comment type="subcellular location">
    <subcellularLocation>
        <location evidence="1">Cytoplasm</location>
    </subcellularLocation>
</comment>
<comment type="PTM">
    <text evidence="1">4'-phosphopantetheine is transferred from CoA to a specific serine of apo-ACP by AcpS. This modification is essential for activity because fatty acids are bound in thioester linkage to the sulfhydryl of the prosthetic group.</text>
</comment>
<comment type="similarity">
    <text evidence="1">Belongs to the acyl carrier protein (ACP) family.</text>
</comment>
<accession>B9M0W2</accession>
<feature type="chain" id="PRO_1000164788" description="Acyl carrier protein">
    <location>
        <begin position="1"/>
        <end position="77"/>
    </location>
</feature>
<feature type="domain" description="Carrier" evidence="2">
    <location>
        <begin position="2"/>
        <end position="77"/>
    </location>
</feature>
<feature type="modified residue" description="O-(pantetheine 4'-phosphoryl)serine" evidence="2">
    <location>
        <position position="37"/>
    </location>
</feature>
<reference key="1">
    <citation type="submission" date="2009-01" db="EMBL/GenBank/DDBJ databases">
        <title>Complete sequence of Geobacter sp. FRC-32.</title>
        <authorList>
            <consortium name="US DOE Joint Genome Institute"/>
            <person name="Lucas S."/>
            <person name="Copeland A."/>
            <person name="Lapidus A."/>
            <person name="Glavina del Rio T."/>
            <person name="Dalin E."/>
            <person name="Tice H."/>
            <person name="Bruce D."/>
            <person name="Goodwin L."/>
            <person name="Pitluck S."/>
            <person name="Saunders E."/>
            <person name="Brettin T."/>
            <person name="Detter J.C."/>
            <person name="Han C."/>
            <person name="Larimer F."/>
            <person name="Land M."/>
            <person name="Hauser L."/>
            <person name="Kyrpides N."/>
            <person name="Ovchinnikova G."/>
            <person name="Kostka J."/>
            <person name="Richardson P."/>
        </authorList>
    </citation>
    <scope>NUCLEOTIDE SEQUENCE [LARGE SCALE GENOMIC DNA]</scope>
    <source>
        <strain>DSM 22248 / JCM 15807 / FRC-32</strain>
    </source>
</reference>